<organism>
    <name type="scientific">Nematostella vectensis</name>
    <name type="common">Starlet sea anemone</name>
    <dbReference type="NCBI Taxonomy" id="45351"/>
    <lineage>
        <taxon>Eukaryota</taxon>
        <taxon>Metazoa</taxon>
        <taxon>Cnidaria</taxon>
        <taxon>Anthozoa</taxon>
        <taxon>Hexacorallia</taxon>
        <taxon>Actiniaria</taxon>
        <taxon>Edwardsiidae</taxon>
        <taxon>Nematostella</taxon>
    </lineage>
</organism>
<reference key="1">
    <citation type="journal article" date="2007" name="Science">
        <title>Sea anemone genome reveals ancestral eumetazoan gene repertoire and genomic organization.</title>
        <authorList>
            <person name="Putnam N.H."/>
            <person name="Srivastava M."/>
            <person name="Hellsten U."/>
            <person name="Dirks B."/>
            <person name="Chapman J."/>
            <person name="Salamov A."/>
            <person name="Terry A."/>
            <person name="Shapiro H."/>
            <person name="Lindquist E."/>
            <person name="Kapitonov V.V."/>
            <person name="Jurka J."/>
            <person name="Genikhovich G."/>
            <person name="Grigoriev I.V."/>
            <person name="Lucas S.M."/>
            <person name="Steele R.E."/>
            <person name="Finnerty J.R."/>
            <person name="Technau U."/>
            <person name="Martindale M.Q."/>
            <person name="Rokhsar D.S."/>
        </authorList>
    </citation>
    <scope>NUCLEOTIDE SEQUENCE [LARGE SCALE GENOMIC DNA]</scope>
    <source>
        <strain>CH2 X CH6</strain>
    </source>
</reference>
<name>CLP1_NEMVE</name>
<keyword id="KW-0067">ATP-binding</keyword>
<keyword id="KW-0507">mRNA processing</keyword>
<keyword id="KW-0547">Nucleotide-binding</keyword>
<keyword id="KW-0539">Nucleus</keyword>
<keyword id="KW-1185">Reference proteome</keyword>
<accession>A7RG82</accession>
<dbReference type="EMBL" id="DS469509">
    <property type="protein sequence ID" value="EDO49377.1"/>
    <property type="molecule type" value="Genomic_DNA"/>
</dbReference>
<dbReference type="SMR" id="A7RG82"/>
<dbReference type="FunCoup" id="A7RG82">
    <property type="interactions" value="678"/>
</dbReference>
<dbReference type="STRING" id="45351.A7RG82"/>
<dbReference type="EnsemblMetazoa" id="EDO49377">
    <property type="protein sequence ID" value="EDO49377"/>
    <property type="gene ID" value="NEMVEDRAFT_v1g236308"/>
</dbReference>
<dbReference type="KEGG" id="nve:5521765"/>
<dbReference type="eggNOG" id="KOG2749">
    <property type="taxonomic scope" value="Eukaryota"/>
</dbReference>
<dbReference type="HOGENOM" id="CLU_018195_1_0_1"/>
<dbReference type="InParanoid" id="A7RG82"/>
<dbReference type="OMA" id="VQYVNCH"/>
<dbReference type="OrthoDB" id="258143at2759"/>
<dbReference type="PhylomeDB" id="A7RG82"/>
<dbReference type="Proteomes" id="UP000001593">
    <property type="component" value="Unassembled WGS sequence"/>
</dbReference>
<dbReference type="GO" id="GO:0005849">
    <property type="term" value="C:mRNA cleavage factor complex"/>
    <property type="evidence" value="ECO:0007669"/>
    <property type="project" value="InterPro"/>
</dbReference>
<dbReference type="GO" id="GO:0005634">
    <property type="term" value="C:nucleus"/>
    <property type="evidence" value="ECO:0000318"/>
    <property type="project" value="GO_Central"/>
</dbReference>
<dbReference type="GO" id="GO:0005524">
    <property type="term" value="F:ATP binding"/>
    <property type="evidence" value="ECO:0007669"/>
    <property type="project" value="UniProtKB-UniRule"/>
</dbReference>
<dbReference type="GO" id="GO:0051731">
    <property type="term" value="F:polynucleotide 5'-hydroxyl-kinase activity"/>
    <property type="evidence" value="ECO:0000318"/>
    <property type="project" value="GO_Central"/>
</dbReference>
<dbReference type="GO" id="GO:0031124">
    <property type="term" value="P:mRNA 3'-end processing"/>
    <property type="evidence" value="ECO:0007669"/>
    <property type="project" value="UniProtKB-UniRule"/>
</dbReference>
<dbReference type="GO" id="GO:0006388">
    <property type="term" value="P:tRNA splicing, via endonucleolytic cleavage and ligation"/>
    <property type="evidence" value="ECO:0000318"/>
    <property type="project" value="GO_Central"/>
</dbReference>
<dbReference type="CDD" id="cd01983">
    <property type="entry name" value="SIMIBI"/>
    <property type="match status" value="1"/>
</dbReference>
<dbReference type="FunFam" id="2.40.30.330:FF:000001">
    <property type="entry name" value="Protein CLP1 homolog"/>
    <property type="match status" value="1"/>
</dbReference>
<dbReference type="FunFam" id="3.40.50.300:FF:000454">
    <property type="entry name" value="Protein CLP1 homolog"/>
    <property type="match status" value="1"/>
</dbReference>
<dbReference type="FunFam" id="2.60.120.1030:FF:000001">
    <property type="entry name" value="Protein CLP1 homolog 5"/>
    <property type="match status" value="1"/>
</dbReference>
<dbReference type="Gene3D" id="2.60.120.1030">
    <property type="entry name" value="Clp1, DNA binding domain"/>
    <property type="match status" value="1"/>
</dbReference>
<dbReference type="Gene3D" id="3.40.50.300">
    <property type="entry name" value="P-loop containing nucleotide triphosphate hydrolases"/>
    <property type="match status" value="1"/>
</dbReference>
<dbReference type="Gene3D" id="2.40.30.330">
    <property type="entry name" value="Pre-mRNA cleavage complex subunit Clp1, C-terminal domain"/>
    <property type="match status" value="1"/>
</dbReference>
<dbReference type="HAMAP" id="MF_03035">
    <property type="entry name" value="Clp1"/>
    <property type="match status" value="1"/>
</dbReference>
<dbReference type="InterPro" id="IPR028606">
    <property type="entry name" value="Clp1"/>
</dbReference>
<dbReference type="InterPro" id="IPR045116">
    <property type="entry name" value="Clp1/Grc3"/>
</dbReference>
<dbReference type="InterPro" id="IPR010655">
    <property type="entry name" value="Clp1_C"/>
</dbReference>
<dbReference type="InterPro" id="IPR038238">
    <property type="entry name" value="Clp1_C_sf"/>
</dbReference>
<dbReference type="InterPro" id="IPR032324">
    <property type="entry name" value="Clp1_N"/>
</dbReference>
<dbReference type="InterPro" id="IPR038239">
    <property type="entry name" value="Clp1_N_sf"/>
</dbReference>
<dbReference type="InterPro" id="IPR032319">
    <property type="entry name" value="CLP1_P"/>
</dbReference>
<dbReference type="InterPro" id="IPR027417">
    <property type="entry name" value="P-loop_NTPase"/>
</dbReference>
<dbReference type="PANTHER" id="PTHR12755">
    <property type="entry name" value="CLEAVAGE/POLYADENYLATION FACTOR IA SUBUNIT CLP1P"/>
    <property type="match status" value="1"/>
</dbReference>
<dbReference type="PANTHER" id="PTHR12755:SF6">
    <property type="entry name" value="POLYRIBONUCLEOTIDE 5'-HYDROXYL-KINASE CLP1"/>
    <property type="match status" value="1"/>
</dbReference>
<dbReference type="Pfam" id="PF06807">
    <property type="entry name" value="Clp1"/>
    <property type="match status" value="1"/>
</dbReference>
<dbReference type="Pfam" id="PF16573">
    <property type="entry name" value="CLP1_N"/>
    <property type="match status" value="1"/>
</dbReference>
<dbReference type="Pfam" id="PF16575">
    <property type="entry name" value="CLP1_P"/>
    <property type="match status" value="1"/>
</dbReference>
<dbReference type="SUPFAM" id="SSF52540">
    <property type="entry name" value="P-loop containing nucleoside triphosphate hydrolases"/>
    <property type="match status" value="2"/>
</dbReference>
<gene>
    <name type="ORF">v1g236308</name>
</gene>
<evidence type="ECO:0000255" key="1">
    <source>
        <dbReference type="HAMAP-Rule" id="MF_03035"/>
    </source>
</evidence>
<sequence length="428" mass="47944">MDTEQDAKSEERQQWKLEKDTELRVEVAEGDREAIIVLLSGNAEVFGTELVKNKKFTFRPGSKLAIFTWQGCSVEIQGPLEVAYKSKETPMVMYLNLHMALEQMRERADKHEAVELGPRVMVVGPTDVGKSTVCQLLLNYAVRMGRRPISVDLDVGQGTASVPGSMGALLLERPADIEEGFSLQAPLVYLFGHTSPSPNEKLYNMLSSKIADIVFQRFERNKKACASGCVINTCGWVTGMGYRIIVHAATAFKVNVIVVLDQERLYNDLKNQFGDKVQIVHLPKSGGVVVRSRETRRKVRDERLRSYFYGQQANLYPHSFEVKFSDVKLFKIGAPLVPDSCLPLGMDQGQNETKLVPVVPTKDLKHCLLAISAAESLEEDLVQTNVIGFLVVNEVDLDREVMVVLSPAPRPLPRKFLLLSEIKFMDFK</sequence>
<protein>
    <recommendedName>
        <fullName evidence="1">Protein CLP1 homolog</fullName>
    </recommendedName>
</protein>
<proteinExistence type="inferred from homology"/>
<feature type="chain" id="PRO_0000375190" description="Protein CLP1 homolog">
    <location>
        <begin position="1"/>
        <end position="428"/>
    </location>
</feature>
<feature type="binding site" evidence="1">
    <location>
        <position position="22"/>
    </location>
    <ligand>
        <name>ATP</name>
        <dbReference type="ChEBI" id="CHEBI:30616"/>
    </ligand>
</feature>
<feature type="binding site" evidence="1">
    <location>
        <position position="63"/>
    </location>
    <ligand>
        <name>ATP</name>
        <dbReference type="ChEBI" id="CHEBI:30616"/>
    </ligand>
</feature>
<feature type="binding site" evidence="1">
    <location>
        <begin position="127"/>
        <end position="132"/>
    </location>
    <ligand>
        <name>ATP</name>
        <dbReference type="ChEBI" id="CHEBI:30616"/>
    </ligand>
</feature>
<comment type="function">
    <text evidence="1">Required for endonucleolytic cleavage during polyadenylation-dependent pre-mRNA 3'-end formation.</text>
</comment>
<comment type="subcellular location">
    <subcellularLocation>
        <location evidence="1">Nucleus</location>
    </subcellularLocation>
</comment>
<comment type="similarity">
    <text evidence="1">Belongs to the Clp1 family. Clp1 subfamily.</text>
</comment>